<comment type="subcellular location">
    <subcellularLocation>
        <location evidence="3">Secreted</location>
    </subcellularLocation>
</comment>
<comment type="tissue specificity">
    <text evidence="3">Component of the acid-insoluble and acid-soluble organic matrix of calcified layers of the shell (at protein level).</text>
</comment>
<comment type="similarity">
    <text evidence="2">Belongs to the peroxidase family.</text>
</comment>
<accession>B3A0Q8</accession>
<reference evidence="5" key="1">
    <citation type="submission" date="2007-12" db="EMBL/GenBank/DDBJ databases">
        <title>DOE Joint Genome Institute Lottia gigantea EST project.</title>
        <authorList>
            <person name="Richardson P."/>
            <person name="Lucas S."/>
            <person name="Rokhsar D."/>
            <person name="Wang M."/>
            <person name="Lindquist E.A."/>
        </authorList>
    </citation>
    <scope>NUCLEOTIDE SEQUENCE [LARGE SCALE MRNA]</scope>
    <scope>IDENTIFICATION</scope>
    <source>
        <tissue evidence="4">Mantle</tissue>
    </source>
</reference>
<reference key="2">
    <citation type="journal article" date="2013" name="FEBS J.">
        <title>The shell-forming proteome of Lottia gigantea reveals both deep conservations and lineage-specific novelties.</title>
        <authorList>
            <person name="Marie B."/>
            <person name="Jackson D.J."/>
            <person name="Ramos-Silva P."/>
            <person name="Zanella-Cleon I."/>
            <person name="Guichard N."/>
            <person name="Marin F."/>
        </authorList>
    </citation>
    <scope>PROTEIN SEQUENCE OF 11-18 AND 249-265</scope>
    <scope>SUBCELLULAR LOCATION</scope>
    <scope>TISSUE SPECIFICITY</scope>
    <source>
        <tissue>Shell</tissue>
    </source>
</reference>
<protein>
    <recommendedName>
        <fullName>Peroxidase-like protein 3</fullName>
    </recommendedName>
</protein>
<dbReference type="EMBL" id="FC622773">
    <property type="status" value="NOT_ANNOTATED_CDS"/>
    <property type="molecule type" value="mRNA"/>
</dbReference>
<dbReference type="EMBL" id="FC631979">
    <property type="status" value="NOT_ANNOTATED_CDS"/>
    <property type="molecule type" value="mRNA"/>
</dbReference>
<dbReference type="SMR" id="B3A0Q8"/>
<dbReference type="GO" id="GO:0005576">
    <property type="term" value="C:extracellular region"/>
    <property type="evidence" value="ECO:0007669"/>
    <property type="project" value="UniProtKB-SubCell"/>
</dbReference>
<dbReference type="GO" id="GO:0020037">
    <property type="term" value="F:heme binding"/>
    <property type="evidence" value="ECO:0007669"/>
    <property type="project" value="InterPro"/>
</dbReference>
<dbReference type="GO" id="GO:0004601">
    <property type="term" value="F:peroxidase activity"/>
    <property type="evidence" value="ECO:0007669"/>
    <property type="project" value="InterPro"/>
</dbReference>
<dbReference type="GO" id="GO:0006979">
    <property type="term" value="P:response to oxidative stress"/>
    <property type="evidence" value="ECO:0007669"/>
    <property type="project" value="InterPro"/>
</dbReference>
<dbReference type="Gene3D" id="1.10.640.10">
    <property type="entry name" value="Haem peroxidase domain superfamily, animal type"/>
    <property type="match status" value="1"/>
</dbReference>
<dbReference type="InterPro" id="IPR019791">
    <property type="entry name" value="Haem_peroxidase_animal"/>
</dbReference>
<dbReference type="InterPro" id="IPR010255">
    <property type="entry name" value="Haem_peroxidase_sf"/>
</dbReference>
<dbReference type="InterPro" id="IPR037120">
    <property type="entry name" value="Haem_peroxidase_sf_animal"/>
</dbReference>
<dbReference type="PANTHER" id="PTHR11475:SF4">
    <property type="entry name" value="CHORION PEROXIDASE"/>
    <property type="match status" value="1"/>
</dbReference>
<dbReference type="PANTHER" id="PTHR11475">
    <property type="entry name" value="OXIDASE/PEROXIDASE"/>
    <property type="match status" value="1"/>
</dbReference>
<dbReference type="Pfam" id="PF03098">
    <property type="entry name" value="An_peroxidase"/>
    <property type="match status" value="1"/>
</dbReference>
<dbReference type="PRINTS" id="PR00457">
    <property type="entry name" value="ANPEROXIDASE"/>
</dbReference>
<dbReference type="SUPFAM" id="SSF48113">
    <property type="entry name" value="Heme-dependent peroxidases"/>
    <property type="match status" value="1"/>
</dbReference>
<dbReference type="PROSITE" id="PS50292">
    <property type="entry name" value="PEROXIDASE_3"/>
    <property type="match status" value="1"/>
</dbReference>
<organism>
    <name type="scientific">Lottia gigantea</name>
    <name type="common">Giant owl limpet</name>
    <dbReference type="NCBI Taxonomy" id="225164"/>
    <lineage>
        <taxon>Eukaryota</taxon>
        <taxon>Metazoa</taxon>
        <taxon>Spiralia</taxon>
        <taxon>Lophotrochozoa</taxon>
        <taxon>Mollusca</taxon>
        <taxon>Gastropoda</taxon>
        <taxon>Patellogastropoda</taxon>
        <taxon>Lottioidea</taxon>
        <taxon>Lottiidae</taxon>
        <taxon>Lottia</taxon>
    </lineage>
</organism>
<name>PLSP3_LOTGI</name>
<feature type="chain" id="PRO_0000415264" description="Peroxidase-like protein 3">
    <location>
        <begin position="1"/>
        <end position="294"/>
    </location>
</feature>
<feature type="glycosylation site" description="N-linked (GlcNAc...) asparagine" evidence="1">
    <location>
        <position position="129"/>
    </location>
</feature>
<feature type="non-terminal residue" evidence="5">
    <location>
        <position position="1"/>
    </location>
</feature>
<proteinExistence type="evidence at protein level"/>
<evidence type="ECO:0000255" key="1"/>
<evidence type="ECO:0000255" key="2">
    <source>
        <dbReference type="PROSITE-ProRule" id="PRU00298"/>
    </source>
</evidence>
<evidence type="ECO:0000269" key="3">
    <source>
    </source>
</evidence>
<evidence type="ECO:0000269" key="4">
    <source ref="1"/>
</evidence>
<evidence type="ECO:0000305" key="5"/>
<keyword id="KW-0903">Direct protein sequencing</keyword>
<keyword id="KW-0325">Glycoprotein</keyword>
<keyword id="KW-0964">Secreted</keyword>
<sequence>ADKIFEETKKIINAFIQRITYVEFLPEILNAETLKNNELNEGIYGYEEFTDPRISNVFSTAAFQFIHSLTPSSIEFDGTETPLMDLFNNQNFLFLDTEKVAVYMMSSAGEPMDRFFSKQLTDHYFQSGNISFDLVAQIIQRGRDHGLPSYNTFRRHCGLPRLPHFYAMEAANVLKAVYHNIDDVDVFVGGMVEIPLPGSLLGPTFSCLIARQFRDTKFGDSHWYESADPKKGFNEGQLKSIKAMSAAKILCDGFGLSLIPENPFRVTSPSNPMVVCADLPGLDFQPWFLLGNQI</sequence>